<dbReference type="EC" id="2.5.1.19" evidence="1"/>
<dbReference type="EMBL" id="CP001403">
    <property type="protein sequence ID" value="ACP46166.1"/>
    <property type="molecule type" value="Genomic_DNA"/>
</dbReference>
<dbReference type="RefSeq" id="WP_012713987.1">
    <property type="nucleotide sequence ID" value="NC_012622.1"/>
</dbReference>
<dbReference type="SMR" id="C3N7H2"/>
<dbReference type="GeneID" id="7809627"/>
<dbReference type="KEGG" id="siy:YG5714_1910"/>
<dbReference type="HOGENOM" id="CLU_024321_0_0_2"/>
<dbReference type="UniPathway" id="UPA00053"/>
<dbReference type="Proteomes" id="UP000002308">
    <property type="component" value="Chromosome"/>
</dbReference>
<dbReference type="GO" id="GO:0005737">
    <property type="term" value="C:cytoplasm"/>
    <property type="evidence" value="ECO:0007669"/>
    <property type="project" value="UniProtKB-SubCell"/>
</dbReference>
<dbReference type="GO" id="GO:0003866">
    <property type="term" value="F:3-phosphoshikimate 1-carboxyvinyltransferase activity"/>
    <property type="evidence" value="ECO:0007669"/>
    <property type="project" value="UniProtKB-UniRule"/>
</dbReference>
<dbReference type="GO" id="GO:0008652">
    <property type="term" value="P:amino acid biosynthetic process"/>
    <property type="evidence" value="ECO:0007669"/>
    <property type="project" value="UniProtKB-KW"/>
</dbReference>
<dbReference type="GO" id="GO:0009073">
    <property type="term" value="P:aromatic amino acid family biosynthetic process"/>
    <property type="evidence" value="ECO:0007669"/>
    <property type="project" value="UniProtKB-KW"/>
</dbReference>
<dbReference type="GO" id="GO:0009423">
    <property type="term" value="P:chorismate biosynthetic process"/>
    <property type="evidence" value="ECO:0007669"/>
    <property type="project" value="UniProtKB-UniRule"/>
</dbReference>
<dbReference type="CDD" id="cd01556">
    <property type="entry name" value="EPSP_synthase"/>
    <property type="match status" value="1"/>
</dbReference>
<dbReference type="FunFam" id="3.65.10.10:FF:000015">
    <property type="entry name" value="3-phosphoshikimate 1-carboxyvinyltransferase"/>
    <property type="match status" value="1"/>
</dbReference>
<dbReference type="Gene3D" id="3.65.10.10">
    <property type="entry name" value="Enolpyruvate transferase domain"/>
    <property type="match status" value="2"/>
</dbReference>
<dbReference type="HAMAP" id="MF_00210">
    <property type="entry name" value="EPSP_synth"/>
    <property type="match status" value="1"/>
</dbReference>
<dbReference type="InterPro" id="IPR001986">
    <property type="entry name" value="Enolpyruvate_Tfrase_dom"/>
</dbReference>
<dbReference type="InterPro" id="IPR036968">
    <property type="entry name" value="Enolpyruvate_Tfrase_sf"/>
</dbReference>
<dbReference type="InterPro" id="IPR006264">
    <property type="entry name" value="EPSP_synthase"/>
</dbReference>
<dbReference type="InterPro" id="IPR023193">
    <property type="entry name" value="EPSP_synthase_CS"/>
</dbReference>
<dbReference type="InterPro" id="IPR013792">
    <property type="entry name" value="RNA3'P_cycl/enolpyr_Trfase_a/b"/>
</dbReference>
<dbReference type="NCBIfam" id="TIGR01356">
    <property type="entry name" value="aroA"/>
    <property type="match status" value="1"/>
</dbReference>
<dbReference type="PANTHER" id="PTHR21090">
    <property type="entry name" value="AROM/DEHYDROQUINATE SYNTHASE"/>
    <property type="match status" value="1"/>
</dbReference>
<dbReference type="PANTHER" id="PTHR21090:SF5">
    <property type="entry name" value="PENTAFUNCTIONAL AROM POLYPEPTIDE"/>
    <property type="match status" value="1"/>
</dbReference>
<dbReference type="Pfam" id="PF00275">
    <property type="entry name" value="EPSP_synthase"/>
    <property type="match status" value="1"/>
</dbReference>
<dbReference type="PIRSF" id="PIRSF000505">
    <property type="entry name" value="EPSPS"/>
    <property type="match status" value="1"/>
</dbReference>
<dbReference type="SUPFAM" id="SSF55205">
    <property type="entry name" value="EPT/RTPC-like"/>
    <property type="match status" value="1"/>
</dbReference>
<dbReference type="PROSITE" id="PS00104">
    <property type="entry name" value="EPSP_SYNTHASE_1"/>
    <property type="match status" value="1"/>
</dbReference>
<dbReference type="PROSITE" id="PS00885">
    <property type="entry name" value="EPSP_SYNTHASE_2"/>
    <property type="match status" value="1"/>
</dbReference>
<reference key="1">
    <citation type="journal article" date="2009" name="Proc. Natl. Acad. Sci. U.S.A.">
        <title>Biogeography of the Sulfolobus islandicus pan-genome.</title>
        <authorList>
            <person name="Reno M.L."/>
            <person name="Held N.L."/>
            <person name="Fields C.J."/>
            <person name="Burke P.V."/>
            <person name="Whitaker R.J."/>
        </authorList>
    </citation>
    <scope>NUCLEOTIDE SEQUENCE [LARGE SCALE GENOMIC DNA]</scope>
    <source>
        <strain>Y.G.57.14 / Yellowstone #1</strain>
    </source>
</reference>
<feature type="chain" id="PRO_1000204176" description="3-phosphoshikimate 1-carboxyvinyltransferase">
    <location>
        <begin position="1"/>
        <end position="414"/>
    </location>
</feature>
<feature type="active site" description="Proton acceptor" evidence="1">
    <location>
        <position position="296"/>
    </location>
</feature>
<feature type="binding site" evidence="1">
    <location>
        <position position="20"/>
    </location>
    <ligand>
        <name>3-phosphoshikimate</name>
        <dbReference type="ChEBI" id="CHEBI:145989"/>
    </ligand>
</feature>
<feature type="binding site" evidence="1">
    <location>
        <position position="20"/>
    </location>
    <ligand>
        <name>phosphoenolpyruvate</name>
        <dbReference type="ChEBI" id="CHEBI:58702"/>
    </ligand>
</feature>
<feature type="binding site" evidence="1">
    <location>
        <position position="21"/>
    </location>
    <ligand>
        <name>3-phosphoshikimate</name>
        <dbReference type="ChEBI" id="CHEBI:145989"/>
    </ligand>
</feature>
<feature type="binding site" evidence="1">
    <location>
        <position position="25"/>
    </location>
    <ligand>
        <name>3-phosphoshikimate</name>
        <dbReference type="ChEBI" id="CHEBI:145989"/>
    </ligand>
</feature>
<feature type="binding site" evidence="1">
    <location>
        <position position="85"/>
    </location>
    <ligand>
        <name>phosphoenolpyruvate</name>
        <dbReference type="ChEBI" id="CHEBI:58702"/>
    </ligand>
</feature>
<feature type="binding site" evidence="1">
    <location>
        <position position="113"/>
    </location>
    <ligand>
        <name>phosphoenolpyruvate</name>
        <dbReference type="ChEBI" id="CHEBI:58702"/>
    </ligand>
</feature>
<feature type="binding site" evidence="1">
    <location>
        <position position="154"/>
    </location>
    <ligand>
        <name>3-phosphoshikimate</name>
        <dbReference type="ChEBI" id="CHEBI:145989"/>
    </ligand>
</feature>
<feature type="binding site" evidence="1">
    <location>
        <position position="155"/>
    </location>
    <ligand>
        <name>3-phosphoshikimate</name>
        <dbReference type="ChEBI" id="CHEBI:145989"/>
    </ligand>
</feature>
<feature type="binding site" evidence="1">
    <location>
        <position position="156"/>
    </location>
    <ligand>
        <name>3-phosphoshikimate</name>
        <dbReference type="ChEBI" id="CHEBI:145989"/>
    </ligand>
</feature>
<feature type="binding site" evidence="1">
    <location>
        <position position="156"/>
    </location>
    <ligand>
        <name>phosphoenolpyruvate</name>
        <dbReference type="ChEBI" id="CHEBI:58702"/>
    </ligand>
</feature>
<feature type="binding site" evidence="1">
    <location>
        <position position="181"/>
    </location>
    <ligand>
        <name>3-phosphoshikimate</name>
        <dbReference type="ChEBI" id="CHEBI:145989"/>
    </ligand>
</feature>
<feature type="binding site" evidence="1">
    <location>
        <position position="296"/>
    </location>
    <ligand>
        <name>3-phosphoshikimate</name>
        <dbReference type="ChEBI" id="CHEBI:145989"/>
    </ligand>
</feature>
<feature type="binding site" evidence="1">
    <location>
        <position position="323"/>
    </location>
    <ligand>
        <name>3-phosphoshikimate</name>
        <dbReference type="ChEBI" id="CHEBI:145989"/>
    </ligand>
</feature>
<feature type="binding site" evidence="1">
    <location>
        <position position="327"/>
    </location>
    <ligand>
        <name>phosphoenolpyruvate</name>
        <dbReference type="ChEBI" id="CHEBI:58702"/>
    </ligand>
</feature>
<feature type="binding site" evidence="1">
    <location>
        <position position="371"/>
    </location>
    <ligand>
        <name>phosphoenolpyruvate</name>
        <dbReference type="ChEBI" id="CHEBI:58702"/>
    </ligand>
</feature>
<feature type="binding site" evidence="1">
    <location>
        <position position="395"/>
    </location>
    <ligand>
        <name>phosphoenolpyruvate</name>
        <dbReference type="ChEBI" id="CHEBI:58702"/>
    </ligand>
</feature>
<comment type="function">
    <text evidence="1">Catalyzes the transfer of the enolpyruvyl moiety of phosphoenolpyruvate (PEP) to the 5-hydroxyl of shikimate-3-phosphate (S3P) to produce enolpyruvyl shikimate-3-phosphate and inorganic phosphate.</text>
</comment>
<comment type="catalytic activity">
    <reaction evidence="1">
        <text>3-phosphoshikimate + phosphoenolpyruvate = 5-O-(1-carboxyvinyl)-3-phosphoshikimate + phosphate</text>
        <dbReference type="Rhea" id="RHEA:21256"/>
        <dbReference type="ChEBI" id="CHEBI:43474"/>
        <dbReference type="ChEBI" id="CHEBI:57701"/>
        <dbReference type="ChEBI" id="CHEBI:58702"/>
        <dbReference type="ChEBI" id="CHEBI:145989"/>
        <dbReference type="EC" id="2.5.1.19"/>
    </reaction>
    <physiologicalReaction direction="left-to-right" evidence="1">
        <dbReference type="Rhea" id="RHEA:21257"/>
    </physiologicalReaction>
</comment>
<comment type="pathway">
    <text evidence="1">Metabolic intermediate biosynthesis; chorismate biosynthesis.</text>
</comment>
<comment type="subunit">
    <text evidence="1">Monomer.</text>
</comment>
<comment type="subcellular location">
    <subcellularLocation>
        <location evidence="1">Cytoplasm</location>
    </subcellularLocation>
</comment>
<comment type="similarity">
    <text evidence="1">Belongs to the EPSP synthase family.</text>
</comment>
<accession>C3N7H2</accession>
<gene>
    <name evidence="1" type="primary">aroA</name>
    <name type="ordered locus">YG5714_1910</name>
</gene>
<sequence length="414" mass="45308">MIVRIYPSEISGTIKAPQSKSLAIRLIFLSLFTRIHLHNLVLSEDVIDAINSVRALGVEVKNNSEFIPPEKLEIKKKFIKLKGSGTTLRMLIPIVAAIGGEVTIDAEESLRRRPLKRIVEALSNYGISFSSSSLPLTITGKLSSYNIKISGDESSQYISGLIYALHILNGGSIEILPPISSKSYILLTVDLFNRFGSNVKFYGNKIHINPNNLVEFQGEVAGDYGLASFYALSALVSGGRTTIVNLWEPKEYFGDHSIVKILKEMGATSEYLDGKWYVEAKDKYSSIKVNIDDAPDLAMTIAGLAAIAEGTSEITGIERLRIKESDRIESIRKVLGLYGVGSEVKSNSILIFGINKRMLSSPITDCLNDHRVAMMSSALALVNGGVITSAECVSKSNPNYWQDLLSLNAKISIE</sequence>
<protein>
    <recommendedName>
        <fullName evidence="1">3-phosphoshikimate 1-carboxyvinyltransferase</fullName>
        <ecNumber evidence="1">2.5.1.19</ecNumber>
    </recommendedName>
    <alternativeName>
        <fullName evidence="1">5-enolpyruvylshikimate-3-phosphate synthase</fullName>
        <shortName evidence="1">EPSP synthase</shortName>
        <shortName evidence="1">EPSPS</shortName>
    </alternativeName>
</protein>
<proteinExistence type="inferred from homology"/>
<evidence type="ECO:0000255" key="1">
    <source>
        <dbReference type="HAMAP-Rule" id="MF_00210"/>
    </source>
</evidence>
<name>AROA_SACI7</name>
<organism>
    <name type="scientific">Saccharolobus islandicus (strain Y.G.57.14 / Yellowstone #1)</name>
    <name type="common">Sulfolobus islandicus</name>
    <dbReference type="NCBI Taxonomy" id="439386"/>
    <lineage>
        <taxon>Archaea</taxon>
        <taxon>Thermoproteota</taxon>
        <taxon>Thermoprotei</taxon>
        <taxon>Sulfolobales</taxon>
        <taxon>Sulfolobaceae</taxon>
        <taxon>Saccharolobus</taxon>
    </lineage>
</organism>
<keyword id="KW-0028">Amino-acid biosynthesis</keyword>
<keyword id="KW-0057">Aromatic amino acid biosynthesis</keyword>
<keyword id="KW-0963">Cytoplasm</keyword>
<keyword id="KW-0808">Transferase</keyword>